<reference key="1">
    <citation type="submission" date="2009-01" db="EMBL/GenBank/DDBJ databases">
        <title>Complete sequence of Chloroflexus sp. Y-400-fl.</title>
        <authorList>
            <consortium name="US DOE Joint Genome Institute"/>
            <person name="Lucas S."/>
            <person name="Copeland A."/>
            <person name="Lapidus A."/>
            <person name="Glavina del Rio T."/>
            <person name="Dalin E."/>
            <person name="Tice H."/>
            <person name="Bruce D."/>
            <person name="Goodwin L."/>
            <person name="Pitluck S."/>
            <person name="Sims D."/>
            <person name="Kiss H."/>
            <person name="Brettin T."/>
            <person name="Detter J.C."/>
            <person name="Han C."/>
            <person name="Larimer F."/>
            <person name="Land M."/>
            <person name="Hauser L."/>
            <person name="Kyrpides N."/>
            <person name="Ovchinnikova G."/>
            <person name="Bryant D.A."/>
            <person name="Richardson P."/>
        </authorList>
    </citation>
    <scope>NUCLEOTIDE SEQUENCE [LARGE SCALE GENOMIC DNA]</scope>
    <source>
        <strain>ATCC 29364 / DSM 637 / Y-400-fl</strain>
    </source>
</reference>
<comment type="function">
    <text evidence="1">Catalyzes the synthesis of activated sulfate.</text>
</comment>
<comment type="catalytic activity">
    <reaction evidence="1">
        <text>adenosine 5'-phosphosulfate + ATP = 3'-phosphoadenylyl sulfate + ADP + H(+)</text>
        <dbReference type="Rhea" id="RHEA:24152"/>
        <dbReference type="ChEBI" id="CHEBI:15378"/>
        <dbReference type="ChEBI" id="CHEBI:30616"/>
        <dbReference type="ChEBI" id="CHEBI:58243"/>
        <dbReference type="ChEBI" id="CHEBI:58339"/>
        <dbReference type="ChEBI" id="CHEBI:456216"/>
        <dbReference type="EC" id="2.7.1.25"/>
    </reaction>
</comment>
<comment type="pathway">
    <text evidence="1">Sulfur metabolism; hydrogen sulfide biosynthesis; sulfite from sulfate: step 2/3.</text>
</comment>
<comment type="similarity">
    <text evidence="1">Belongs to the APS kinase family.</text>
</comment>
<gene>
    <name evidence="1" type="primary">cysC</name>
    <name type="ordered locus">Chy400_0748</name>
</gene>
<keyword id="KW-0067">ATP-binding</keyword>
<keyword id="KW-0418">Kinase</keyword>
<keyword id="KW-0547">Nucleotide-binding</keyword>
<keyword id="KW-0597">Phosphoprotein</keyword>
<keyword id="KW-0808">Transferase</keyword>
<evidence type="ECO:0000255" key="1">
    <source>
        <dbReference type="HAMAP-Rule" id="MF_00065"/>
    </source>
</evidence>
<accession>B9LKC1</accession>
<dbReference type="EC" id="2.7.1.25" evidence="1"/>
<dbReference type="EMBL" id="CP001364">
    <property type="protein sequence ID" value="ACM52178.1"/>
    <property type="molecule type" value="Genomic_DNA"/>
</dbReference>
<dbReference type="SMR" id="B9LKC1"/>
<dbReference type="KEGG" id="chl:Chy400_0748"/>
<dbReference type="HOGENOM" id="CLU_046932_2_1_0"/>
<dbReference type="UniPathway" id="UPA00140">
    <property type="reaction ID" value="UER00205"/>
</dbReference>
<dbReference type="GO" id="GO:0005737">
    <property type="term" value="C:cytoplasm"/>
    <property type="evidence" value="ECO:0007669"/>
    <property type="project" value="TreeGrafter"/>
</dbReference>
<dbReference type="GO" id="GO:0004020">
    <property type="term" value="F:adenylylsulfate kinase activity"/>
    <property type="evidence" value="ECO:0007669"/>
    <property type="project" value="UniProtKB-UniRule"/>
</dbReference>
<dbReference type="GO" id="GO:0005524">
    <property type="term" value="F:ATP binding"/>
    <property type="evidence" value="ECO:0007669"/>
    <property type="project" value="UniProtKB-UniRule"/>
</dbReference>
<dbReference type="GO" id="GO:0004781">
    <property type="term" value="F:sulfate adenylyltransferase (ATP) activity"/>
    <property type="evidence" value="ECO:0007669"/>
    <property type="project" value="TreeGrafter"/>
</dbReference>
<dbReference type="GO" id="GO:0070814">
    <property type="term" value="P:hydrogen sulfide biosynthetic process"/>
    <property type="evidence" value="ECO:0007669"/>
    <property type="project" value="UniProtKB-UniRule"/>
</dbReference>
<dbReference type="GO" id="GO:0010134">
    <property type="term" value="P:sulfate assimilation via adenylyl sulfate reduction"/>
    <property type="evidence" value="ECO:0007669"/>
    <property type="project" value="TreeGrafter"/>
</dbReference>
<dbReference type="GO" id="GO:0019379">
    <property type="term" value="P:sulfate assimilation, phosphoadenylyl sulfate reduction by phosphoadenylyl-sulfate reductase (thioredoxin)"/>
    <property type="evidence" value="ECO:0007669"/>
    <property type="project" value="TreeGrafter"/>
</dbReference>
<dbReference type="CDD" id="cd02027">
    <property type="entry name" value="APSK"/>
    <property type="match status" value="1"/>
</dbReference>
<dbReference type="FunFam" id="3.40.50.300:FF:000802">
    <property type="entry name" value="Sulfate adenylyltransferase"/>
    <property type="match status" value="1"/>
</dbReference>
<dbReference type="Gene3D" id="3.40.50.300">
    <property type="entry name" value="P-loop containing nucleotide triphosphate hydrolases"/>
    <property type="match status" value="1"/>
</dbReference>
<dbReference type="HAMAP" id="MF_00065">
    <property type="entry name" value="Adenylyl_sulf_kinase"/>
    <property type="match status" value="1"/>
</dbReference>
<dbReference type="InterPro" id="IPR002891">
    <property type="entry name" value="APS_kinase"/>
</dbReference>
<dbReference type="InterPro" id="IPR027417">
    <property type="entry name" value="P-loop_NTPase"/>
</dbReference>
<dbReference type="InterPro" id="IPR050512">
    <property type="entry name" value="Sulf_AdTrans/APS_kinase"/>
</dbReference>
<dbReference type="NCBIfam" id="TIGR00455">
    <property type="entry name" value="apsK"/>
    <property type="match status" value="1"/>
</dbReference>
<dbReference type="NCBIfam" id="NF002059">
    <property type="entry name" value="PRK00889.1"/>
    <property type="match status" value="1"/>
</dbReference>
<dbReference type="NCBIfam" id="NF003013">
    <property type="entry name" value="PRK03846.1"/>
    <property type="match status" value="1"/>
</dbReference>
<dbReference type="PANTHER" id="PTHR42700">
    <property type="entry name" value="SULFATE ADENYLYLTRANSFERASE"/>
    <property type="match status" value="1"/>
</dbReference>
<dbReference type="PANTHER" id="PTHR42700:SF1">
    <property type="entry name" value="SULFATE ADENYLYLTRANSFERASE"/>
    <property type="match status" value="1"/>
</dbReference>
<dbReference type="Pfam" id="PF01583">
    <property type="entry name" value="APS_kinase"/>
    <property type="match status" value="1"/>
</dbReference>
<dbReference type="SUPFAM" id="SSF52540">
    <property type="entry name" value="P-loop containing nucleoside triphosphate hydrolases"/>
    <property type="match status" value="1"/>
</dbReference>
<sequence>MSTIPTTRSGLVVWFTGLSGAGKTTLARALATLLQEAGYPVEQLDGDVVREHLSKGLGFSREDRDTNIRRIGFVANLLAKHGVIVLVSAISPYRETRAEVLAAAPRKLEVFVEAPLDVLIQRDVKGLYAKALRGEIAQFTGISDPYEPPLHPDVHLRTDLMSLPECLDHLLAALERLDIVVKVSHQ</sequence>
<feature type="chain" id="PRO_1000117950" description="Adenylyl-sulfate kinase">
    <location>
        <begin position="1"/>
        <end position="186"/>
    </location>
</feature>
<feature type="active site" description="Phosphoserine intermediate" evidence="1">
    <location>
        <position position="91"/>
    </location>
</feature>
<feature type="binding site" evidence="1">
    <location>
        <begin position="17"/>
        <end position="24"/>
    </location>
    <ligand>
        <name>ATP</name>
        <dbReference type="ChEBI" id="CHEBI:30616"/>
    </ligand>
</feature>
<name>CYSC_CHLSY</name>
<proteinExistence type="inferred from homology"/>
<protein>
    <recommendedName>
        <fullName evidence="1">Adenylyl-sulfate kinase</fullName>
        <ecNumber evidence="1">2.7.1.25</ecNumber>
    </recommendedName>
    <alternativeName>
        <fullName evidence="1">APS kinase</fullName>
    </alternativeName>
    <alternativeName>
        <fullName evidence="1">ATP adenosine-5'-phosphosulfate 3'-phosphotransferase</fullName>
    </alternativeName>
    <alternativeName>
        <fullName evidence="1">Adenosine-5'-phosphosulfate kinase</fullName>
    </alternativeName>
</protein>
<organism>
    <name type="scientific">Chloroflexus aurantiacus (strain ATCC 29364 / DSM 637 / Y-400-fl)</name>
    <dbReference type="NCBI Taxonomy" id="480224"/>
    <lineage>
        <taxon>Bacteria</taxon>
        <taxon>Bacillati</taxon>
        <taxon>Chloroflexota</taxon>
        <taxon>Chloroflexia</taxon>
        <taxon>Chloroflexales</taxon>
        <taxon>Chloroflexineae</taxon>
        <taxon>Chloroflexaceae</taxon>
        <taxon>Chloroflexus</taxon>
    </lineage>
</organism>